<accession>Q8L3A9</accession>
<organism>
    <name type="scientific">Aromatoleum evansii</name>
    <name type="common">Azoarcus evansii</name>
    <dbReference type="NCBI Taxonomy" id="59406"/>
    <lineage>
        <taxon>Bacteria</taxon>
        <taxon>Pseudomonadati</taxon>
        <taxon>Pseudomonadota</taxon>
        <taxon>Betaproteobacteria</taxon>
        <taxon>Rhodocyclales</taxon>
        <taxon>Rhodocyclaceae</taxon>
        <taxon>Aromatoleum</taxon>
    </lineage>
</organism>
<dbReference type="EC" id="1.2.1.58"/>
<dbReference type="EMBL" id="AJ428571">
    <property type="protein sequence ID" value="CAD21693.1"/>
    <property type="molecule type" value="Genomic_DNA"/>
</dbReference>
<dbReference type="SMR" id="Q8L3A9"/>
<dbReference type="KEGG" id="ag:CAD21693"/>
<dbReference type="BioCyc" id="MetaCyc:MONOMER-124225"/>
<dbReference type="GO" id="GO:0051539">
    <property type="term" value="F:4 iron, 4 sulfur cluster binding"/>
    <property type="evidence" value="ECO:0007669"/>
    <property type="project" value="UniProtKB-KW"/>
</dbReference>
<dbReference type="GO" id="GO:0046872">
    <property type="term" value="F:metal ion binding"/>
    <property type="evidence" value="ECO:0007669"/>
    <property type="project" value="UniProtKB-KW"/>
</dbReference>
<dbReference type="GO" id="GO:0051287">
    <property type="term" value="F:NAD binding"/>
    <property type="evidence" value="ECO:0000314"/>
    <property type="project" value="UniProtKB"/>
</dbReference>
<dbReference type="GO" id="GO:0047110">
    <property type="term" value="F:phenylglyoxylate dehydrogenase (acylating) activity"/>
    <property type="evidence" value="ECO:0000314"/>
    <property type="project" value="UniProtKB"/>
</dbReference>
<dbReference type="GO" id="GO:0030976">
    <property type="term" value="F:thiamine pyrophosphate binding"/>
    <property type="evidence" value="ECO:0007669"/>
    <property type="project" value="InterPro"/>
</dbReference>
<dbReference type="GO" id="GO:0006558">
    <property type="term" value="P:L-phenylalanine metabolic process"/>
    <property type="evidence" value="ECO:0000314"/>
    <property type="project" value="UniProtKB"/>
</dbReference>
<dbReference type="CDD" id="cd10550">
    <property type="entry name" value="DMSOR_beta_like"/>
    <property type="match status" value="1"/>
</dbReference>
<dbReference type="CDD" id="cd03376">
    <property type="entry name" value="TPP_PFOR_porB_like"/>
    <property type="match status" value="1"/>
</dbReference>
<dbReference type="Gene3D" id="3.30.70.20">
    <property type="match status" value="2"/>
</dbReference>
<dbReference type="Gene3D" id="3.40.50.970">
    <property type="match status" value="1"/>
</dbReference>
<dbReference type="InterPro" id="IPR017896">
    <property type="entry name" value="4Fe4S_Fe-S-bd"/>
</dbReference>
<dbReference type="InterPro" id="IPR054808">
    <property type="entry name" value="PadI"/>
</dbReference>
<dbReference type="InterPro" id="IPR051479">
    <property type="entry name" value="PorB-like"/>
</dbReference>
<dbReference type="InterPro" id="IPR029061">
    <property type="entry name" value="THDP-binding"/>
</dbReference>
<dbReference type="InterPro" id="IPR011766">
    <property type="entry name" value="TPP_enzyme_TPP-bd"/>
</dbReference>
<dbReference type="NCBIfam" id="NF045766">
    <property type="entry name" value="PhenlGlyoxDHPadI"/>
    <property type="match status" value="1"/>
</dbReference>
<dbReference type="PANTHER" id="PTHR42897:SF1">
    <property type="entry name" value="2-OXOACID OXIDOREDUCTASE (FERREDOXIN)"/>
    <property type="match status" value="1"/>
</dbReference>
<dbReference type="PANTHER" id="PTHR42897">
    <property type="entry name" value="PYRUVATE SYNTHASE SUBUNIT PORB"/>
    <property type="match status" value="1"/>
</dbReference>
<dbReference type="Pfam" id="PF13247">
    <property type="entry name" value="Fer4_11"/>
    <property type="match status" value="1"/>
</dbReference>
<dbReference type="Pfam" id="PF12837">
    <property type="entry name" value="Fer4_6"/>
    <property type="match status" value="1"/>
</dbReference>
<dbReference type="Pfam" id="PF02775">
    <property type="entry name" value="TPP_enzyme_C"/>
    <property type="match status" value="1"/>
</dbReference>
<dbReference type="SUPFAM" id="SSF54862">
    <property type="entry name" value="4Fe-4S ferredoxins"/>
    <property type="match status" value="1"/>
</dbReference>
<dbReference type="SUPFAM" id="SSF52518">
    <property type="entry name" value="Thiamin diphosphate-binding fold (THDP-binding)"/>
    <property type="match status" value="1"/>
</dbReference>
<dbReference type="PROSITE" id="PS51379">
    <property type="entry name" value="4FE4S_FER_2"/>
    <property type="match status" value="4"/>
</dbReference>
<comment type="function">
    <text evidence="2">Involved in the anaerobic metabolism of phenylalanine and phenylacetate. Catalyzes the oxidative decarboxylation of phenylglyoxylate to benzoyl-CoA and CO(2). It can also react slowly with 2-oxo-3-methylbutanoate and use different electron acceptors such as benzyl viologen, methyl viologen, FAD or FMN, but NAD seems to be the physiological electron acceptor. Also catalyzes an isotope exchange between CO(2) and the carboxyl group which proves partial or complete reversibility of the oxidative decarboxylation reaction.</text>
</comment>
<comment type="catalytic activity">
    <reaction evidence="2">
        <text>phenylglyoxylate + NAD(+) + CoA = benzoyl-CoA + CO2 + NADH</text>
        <dbReference type="Rhea" id="RHEA:10372"/>
        <dbReference type="ChEBI" id="CHEBI:16526"/>
        <dbReference type="ChEBI" id="CHEBI:36656"/>
        <dbReference type="ChEBI" id="CHEBI:57287"/>
        <dbReference type="ChEBI" id="CHEBI:57369"/>
        <dbReference type="ChEBI" id="CHEBI:57540"/>
        <dbReference type="ChEBI" id="CHEBI:57945"/>
        <dbReference type="EC" id="1.2.1.58"/>
    </reaction>
</comment>
<comment type="cofactor">
    <cofactor evidence="3">
        <name>[4Fe-4S] cluster</name>
        <dbReference type="ChEBI" id="CHEBI:49883"/>
    </cofactor>
    <text evidence="3">Binds 3 [4Fe-4S] clusters per heteropentamers.</text>
</comment>
<comment type="activity regulation">
    <text evidence="2">Activated by magnesium ions and thiamine diphosphate.</text>
</comment>
<comment type="biophysicochemical properties">
    <kinetics>
        <KM evidence="2">45 uM for phenylglyoxylate (under anaerobic conditions at 37 degrees Celsius and pH 7.8)</KM>
        <KM evidence="2">55 uM for coenzyme-A (under anaerobic conditions at 37 degrees Celsius and pH 7.8)</KM>
        <KM evidence="2">74 uM for NAD (under anaerobic conditions at 37 degrees Celsius and pH 7.8)</KM>
    </kinetics>
    <phDependence>
        <text evidence="2">Optimum pH is 8 when measured with benzyl viologen. Half-maximal activities are obtained at pH 9 and pH 6.8.</text>
    </phDependence>
</comment>
<comment type="subunit">
    <text evidence="2">Dimer of heteropentamers composed of an alpha (PadG), a beta (PadI), a gamma (PadE), a delta (PadF) and an epsilon (PadH) subunit.</text>
</comment>
<comment type="induction">
    <text evidence="2">Induced anaerobically by phenylalanine, phenylacetate or phenylglyoxylate.</text>
</comment>
<keyword id="KW-0004">4Fe-4S</keyword>
<keyword id="KW-0903">Direct protein sequencing</keyword>
<keyword id="KW-0408">Iron</keyword>
<keyword id="KW-0411">Iron-sulfur</keyword>
<keyword id="KW-0479">Metal-binding</keyword>
<keyword id="KW-0520">NAD</keyword>
<keyword id="KW-0560">Oxidoreductase</keyword>
<keyword id="KW-0677">Repeat</keyword>
<sequence length="446" mass="47981">MGRAYSTIAFDPAKCDGCGDCMTACAQAKTGTDDIARSRIQIYGREGAADKTFELALCRQCADPKCVTVCPAGALNKDGTSGVIGWDATKCVDCLLCTVGCAYAGIALDEATGHVAKCDTCDGNPACVPACPHGALKHITTANIYNEVGDWEDLFAPGLAGCQGCNTELLMRHTLRRVGPDTVLATPPGCVPGMGSVGFNGTTGTKVPVFHPLLTNTAAMLAGIKRQYKRVGRDVQALAIAGDGGASDVGFQSLSGRAERGEQMLFMVVDNEGYMNTGMQRSSCTPYGAWTSTTPVGETSRGKTQDAKNLPLIMVNHRCAYVATASTAYMEDLYDKLDKAIAASKNGFAYLHVYSPCTTAWRFPSNLNMEVARKAVETNFVMLWEYTPQDGLHFTKPVDDPLPVTDYLKAMGRFRHLTPEQVEHIQKKVVENQKFVERMTEHAHVG</sequence>
<proteinExistence type="evidence at protein level"/>
<feature type="chain" id="PRO_0000418537" description="NADH-dependent phenylglyoxylate dehydrogenase subunit beta">
    <location>
        <begin position="1"/>
        <end position="446"/>
    </location>
</feature>
<feature type="domain" description="4Fe-4S ferredoxin-type 1" evidence="1">
    <location>
        <begin position="6"/>
        <end position="35"/>
    </location>
</feature>
<feature type="domain" description="4Fe-4S ferredoxin-type 2" evidence="1">
    <location>
        <begin position="49"/>
        <end position="80"/>
    </location>
</feature>
<feature type="domain" description="4Fe-4S ferredoxin-type 3" evidence="1">
    <location>
        <begin position="82"/>
        <end position="111"/>
    </location>
</feature>
<feature type="domain" description="4Fe-4S ferredoxin-type 4" evidence="1">
    <location>
        <begin position="109"/>
        <end position="141"/>
    </location>
</feature>
<gene>
    <name type="primary">padI</name>
</gene>
<protein>
    <recommendedName>
        <fullName>NADH-dependent phenylglyoxylate dehydrogenase subunit beta</fullName>
        <ecNumber>1.2.1.58</ecNumber>
    </recommendedName>
    <alternativeName>
        <fullName>Phenylglyoxylate:NAD oxidoreductase</fullName>
    </alternativeName>
    <alternativeName>
        <fullName>Phenylglyoxylate:acceptor oxidoreductase</fullName>
    </alternativeName>
</protein>
<evidence type="ECO:0000255" key="1">
    <source>
        <dbReference type="PROSITE-ProRule" id="PRU00711"/>
    </source>
</evidence>
<evidence type="ECO:0000269" key="2">
    <source>
    </source>
</evidence>
<evidence type="ECO:0000305" key="3">
    <source>
    </source>
</evidence>
<name>PADI_AROEV</name>
<reference key="1">
    <citation type="submission" date="2002-01" db="EMBL/GenBank/DDBJ databases">
        <title>Characterization of genes involved in anaerobic phenylacetate degradation in Azoarcus evansii.</title>
        <authorList>
            <person name="Haas S."/>
            <person name="Hammer E."/>
            <person name="Herrmann H."/>
            <person name="Burchhardt G."/>
        </authorList>
    </citation>
    <scope>NUCLEOTIDE SEQUENCE [GENOMIC DNA]</scope>
    <source>
        <strain>DSM 6898 / NBRC 107771 / KB740</strain>
    </source>
</reference>
<reference key="2">
    <citation type="journal article" date="1998" name="Eur. J. Biochem.">
        <title>Phenylglyoxylate:NAD+ oxidoreductase (CoA benzoylating), a new enzyme of anaerobic phenylalanine metabolism in the denitrifying bacterium Azoarcus evansii.</title>
        <authorList>
            <person name="Hirsch W."/>
            <person name="Schagger H."/>
            <person name="Fuchs G."/>
        </authorList>
    </citation>
    <scope>PROTEIN SEQUENCE OF 3-13</scope>
    <scope>FUNCTION AS A PHENYLGLYOXYLATE DEHYDROGENASE</scope>
    <scope>CATALYTIC ACTIVITY</scope>
    <scope>BIOPHYSICOCHEMICAL PROPERTIES</scope>
    <scope>COFACTOR</scope>
    <scope>ACTIVITY REGULATION</scope>
    <scope>SUBSTRATE SPECIFICITY</scope>
    <scope>SUBUNIT</scope>
    <scope>INDUCTION</scope>
    <source>
        <strain>DSM 6898 / NBRC 107771 / KB740</strain>
    </source>
</reference>